<sequence>MARITTEDCTGKISNHFDLTLVAARRARQLENGNTPLVDDVRNNKPTVTALREIAAGHIGTELLTRNK</sequence>
<name>RPOZ_NEIMF</name>
<accession>A1KV69</accession>
<protein>
    <recommendedName>
        <fullName evidence="1">DNA-directed RNA polymerase subunit omega</fullName>
        <shortName evidence="1">RNAP omega subunit</shortName>
        <ecNumber evidence="1">2.7.7.6</ecNumber>
    </recommendedName>
    <alternativeName>
        <fullName evidence="1">RNA polymerase omega subunit</fullName>
    </alternativeName>
    <alternativeName>
        <fullName evidence="1">Transcriptase subunit omega</fullName>
    </alternativeName>
</protein>
<comment type="function">
    <text evidence="1">Promotes RNA polymerase assembly. Latches the N- and C-terminal regions of the beta' subunit thereby facilitating its interaction with the beta and alpha subunits.</text>
</comment>
<comment type="catalytic activity">
    <reaction evidence="1">
        <text>RNA(n) + a ribonucleoside 5'-triphosphate = RNA(n+1) + diphosphate</text>
        <dbReference type="Rhea" id="RHEA:21248"/>
        <dbReference type="Rhea" id="RHEA-COMP:14527"/>
        <dbReference type="Rhea" id="RHEA-COMP:17342"/>
        <dbReference type="ChEBI" id="CHEBI:33019"/>
        <dbReference type="ChEBI" id="CHEBI:61557"/>
        <dbReference type="ChEBI" id="CHEBI:140395"/>
        <dbReference type="EC" id="2.7.7.6"/>
    </reaction>
</comment>
<comment type="subunit">
    <text evidence="1">The RNAP catalytic core consists of 2 alpha, 1 beta, 1 beta' and 1 omega subunit. When a sigma factor is associated with the core the holoenzyme is formed, which can initiate transcription.</text>
</comment>
<comment type="similarity">
    <text evidence="1">Belongs to the RNA polymerase subunit omega family.</text>
</comment>
<feature type="chain" id="PRO_1000005964" description="DNA-directed RNA polymerase subunit omega">
    <location>
        <begin position="1"/>
        <end position="68"/>
    </location>
</feature>
<evidence type="ECO:0000255" key="1">
    <source>
        <dbReference type="HAMAP-Rule" id="MF_00366"/>
    </source>
</evidence>
<proteinExistence type="inferred from homology"/>
<gene>
    <name evidence="1" type="primary">rpoZ</name>
    <name type="ordered locus">NMC1578</name>
</gene>
<reference key="1">
    <citation type="journal article" date="2007" name="PLoS Genet.">
        <title>Meningococcal genetic variation mechanisms viewed through comparative analysis of serogroup C strain FAM18.</title>
        <authorList>
            <person name="Bentley S.D."/>
            <person name="Vernikos G.S."/>
            <person name="Snyder L.A.S."/>
            <person name="Churcher C."/>
            <person name="Arrowsmith C."/>
            <person name="Chillingworth T."/>
            <person name="Cronin A."/>
            <person name="Davis P.H."/>
            <person name="Holroyd N.E."/>
            <person name="Jagels K."/>
            <person name="Maddison M."/>
            <person name="Moule S."/>
            <person name="Rabbinowitsch E."/>
            <person name="Sharp S."/>
            <person name="Unwin L."/>
            <person name="Whitehead S."/>
            <person name="Quail M.A."/>
            <person name="Achtman M."/>
            <person name="Barrell B.G."/>
            <person name="Saunders N.J."/>
            <person name="Parkhill J."/>
        </authorList>
    </citation>
    <scope>NUCLEOTIDE SEQUENCE [LARGE SCALE GENOMIC DNA]</scope>
    <source>
        <strain>ATCC 700532 / DSM 15464 / FAM18</strain>
    </source>
</reference>
<dbReference type="EC" id="2.7.7.6" evidence="1"/>
<dbReference type="EMBL" id="AM421808">
    <property type="protein sequence ID" value="CAM10770.1"/>
    <property type="molecule type" value="Genomic_DNA"/>
</dbReference>
<dbReference type="RefSeq" id="WP_002212665.1">
    <property type="nucleotide sequence ID" value="NC_008767.1"/>
</dbReference>
<dbReference type="SMR" id="A1KV69"/>
<dbReference type="GeneID" id="93387665"/>
<dbReference type="KEGG" id="nmc:NMC1578"/>
<dbReference type="HOGENOM" id="CLU_125406_5_2_4"/>
<dbReference type="Proteomes" id="UP000002286">
    <property type="component" value="Chromosome"/>
</dbReference>
<dbReference type="GO" id="GO:0000428">
    <property type="term" value="C:DNA-directed RNA polymerase complex"/>
    <property type="evidence" value="ECO:0007669"/>
    <property type="project" value="UniProtKB-KW"/>
</dbReference>
<dbReference type="GO" id="GO:0003677">
    <property type="term" value="F:DNA binding"/>
    <property type="evidence" value="ECO:0007669"/>
    <property type="project" value="UniProtKB-UniRule"/>
</dbReference>
<dbReference type="GO" id="GO:0003899">
    <property type="term" value="F:DNA-directed RNA polymerase activity"/>
    <property type="evidence" value="ECO:0007669"/>
    <property type="project" value="UniProtKB-UniRule"/>
</dbReference>
<dbReference type="GO" id="GO:0006351">
    <property type="term" value="P:DNA-templated transcription"/>
    <property type="evidence" value="ECO:0007669"/>
    <property type="project" value="UniProtKB-UniRule"/>
</dbReference>
<dbReference type="Gene3D" id="3.90.940.10">
    <property type="match status" value="1"/>
</dbReference>
<dbReference type="HAMAP" id="MF_00366">
    <property type="entry name" value="RNApol_bact_RpoZ"/>
    <property type="match status" value="1"/>
</dbReference>
<dbReference type="InterPro" id="IPR003716">
    <property type="entry name" value="DNA-dir_RNA_pol_omega"/>
</dbReference>
<dbReference type="InterPro" id="IPR006110">
    <property type="entry name" value="Pol_omega/Rpo6/RPB6"/>
</dbReference>
<dbReference type="InterPro" id="IPR036161">
    <property type="entry name" value="RPB6/omega-like_sf"/>
</dbReference>
<dbReference type="NCBIfam" id="TIGR00690">
    <property type="entry name" value="rpoZ"/>
    <property type="match status" value="1"/>
</dbReference>
<dbReference type="PANTHER" id="PTHR34476">
    <property type="entry name" value="DNA-DIRECTED RNA POLYMERASE SUBUNIT OMEGA"/>
    <property type="match status" value="1"/>
</dbReference>
<dbReference type="PANTHER" id="PTHR34476:SF1">
    <property type="entry name" value="DNA-DIRECTED RNA POLYMERASE SUBUNIT OMEGA"/>
    <property type="match status" value="1"/>
</dbReference>
<dbReference type="Pfam" id="PF01192">
    <property type="entry name" value="RNA_pol_Rpb6"/>
    <property type="match status" value="1"/>
</dbReference>
<dbReference type="SMART" id="SM01409">
    <property type="entry name" value="RNA_pol_Rpb6"/>
    <property type="match status" value="1"/>
</dbReference>
<dbReference type="SUPFAM" id="SSF63562">
    <property type="entry name" value="RPB6/omega subunit-like"/>
    <property type="match status" value="1"/>
</dbReference>
<organism>
    <name type="scientific">Neisseria meningitidis serogroup C / serotype 2a (strain ATCC 700532 / DSM 15464 / FAM18)</name>
    <dbReference type="NCBI Taxonomy" id="272831"/>
    <lineage>
        <taxon>Bacteria</taxon>
        <taxon>Pseudomonadati</taxon>
        <taxon>Pseudomonadota</taxon>
        <taxon>Betaproteobacteria</taxon>
        <taxon>Neisseriales</taxon>
        <taxon>Neisseriaceae</taxon>
        <taxon>Neisseria</taxon>
    </lineage>
</organism>
<keyword id="KW-0240">DNA-directed RNA polymerase</keyword>
<keyword id="KW-0548">Nucleotidyltransferase</keyword>
<keyword id="KW-0804">Transcription</keyword>
<keyword id="KW-0808">Transferase</keyword>